<accession>B6JNP2</accession>
<evidence type="ECO:0000255" key="1">
    <source>
        <dbReference type="HAMAP-Rule" id="MF_00406"/>
    </source>
</evidence>
<gene>
    <name evidence="1" type="primary">fabZ</name>
    <name type="ordered locus">HPP12_1371</name>
</gene>
<feature type="chain" id="PRO_1000123641" description="3-hydroxyacyl-[acyl-carrier-protein] dehydratase FabZ">
    <location>
        <begin position="1"/>
        <end position="159"/>
    </location>
</feature>
<feature type="active site" evidence="1">
    <location>
        <position position="58"/>
    </location>
</feature>
<keyword id="KW-0963">Cytoplasm</keyword>
<keyword id="KW-0441">Lipid A biosynthesis</keyword>
<keyword id="KW-0444">Lipid biosynthesis</keyword>
<keyword id="KW-0443">Lipid metabolism</keyword>
<keyword id="KW-0456">Lyase</keyword>
<reference key="1">
    <citation type="submission" date="2008-10" db="EMBL/GenBank/DDBJ databases">
        <title>The complete genome sequence of Helicobacter pylori strain P12.</title>
        <authorList>
            <person name="Fischer W."/>
            <person name="Windhager L."/>
            <person name="Karnholz A."/>
            <person name="Zeiller M."/>
            <person name="Zimmer R."/>
            <person name="Haas R."/>
        </authorList>
    </citation>
    <scope>NUCLEOTIDE SEQUENCE [LARGE SCALE GENOMIC DNA]</scope>
    <source>
        <strain>P12</strain>
    </source>
</reference>
<protein>
    <recommendedName>
        <fullName evidence="1">3-hydroxyacyl-[acyl-carrier-protein] dehydratase FabZ</fullName>
        <ecNumber evidence="1">4.2.1.59</ecNumber>
    </recommendedName>
    <alternativeName>
        <fullName evidence="1">(3R)-hydroxymyristoyl-[acyl-carrier-protein] dehydratase</fullName>
        <shortName evidence="1">(3R)-hydroxymyristoyl-ACP dehydrase</shortName>
    </alternativeName>
    <alternativeName>
        <fullName evidence="1">Beta-hydroxyacyl-ACP dehydratase</fullName>
    </alternativeName>
</protein>
<name>FABZ_HELP2</name>
<proteinExistence type="inferred from homology"/>
<organism>
    <name type="scientific">Helicobacter pylori (strain P12)</name>
    <dbReference type="NCBI Taxonomy" id="570508"/>
    <lineage>
        <taxon>Bacteria</taxon>
        <taxon>Pseudomonadati</taxon>
        <taxon>Campylobacterota</taxon>
        <taxon>Epsilonproteobacteria</taxon>
        <taxon>Campylobacterales</taxon>
        <taxon>Helicobacteraceae</taxon>
        <taxon>Helicobacter</taxon>
    </lineage>
</organism>
<sequence>MEQSRQNLQSQFFIEHILQILPHRYPMLLVDRIIELQANQKIVAYKNITFNEDVFNGHFPNKPIFPGVLIVEGMAQSGGFLAFTSLWGFDPEIAKTKIVYFMTIDKVKFRIPVTPGDRLEYHLEVLKHKGMIWQVGGTAQVDGKVVAEAELKAMIAERE</sequence>
<comment type="function">
    <text evidence="1">Involved in unsaturated fatty acids biosynthesis. Catalyzes the dehydration of short chain beta-hydroxyacyl-ACPs and long chain saturated and unsaturated beta-hydroxyacyl-ACPs.</text>
</comment>
<comment type="catalytic activity">
    <reaction evidence="1">
        <text>a (3R)-hydroxyacyl-[ACP] = a (2E)-enoyl-[ACP] + H2O</text>
        <dbReference type="Rhea" id="RHEA:13097"/>
        <dbReference type="Rhea" id="RHEA-COMP:9925"/>
        <dbReference type="Rhea" id="RHEA-COMP:9945"/>
        <dbReference type="ChEBI" id="CHEBI:15377"/>
        <dbReference type="ChEBI" id="CHEBI:78784"/>
        <dbReference type="ChEBI" id="CHEBI:78827"/>
        <dbReference type="EC" id="4.2.1.59"/>
    </reaction>
</comment>
<comment type="subcellular location">
    <subcellularLocation>
        <location evidence="1">Cytoplasm</location>
    </subcellularLocation>
</comment>
<comment type="similarity">
    <text evidence="1">Belongs to the thioester dehydratase family. FabZ subfamily.</text>
</comment>
<dbReference type="EC" id="4.2.1.59" evidence="1"/>
<dbReference type="EMBL" id="CP001217">
    <property type="protein sequence ID" value="ACJ08520.1"/>
    <property type="molecule type" value="Genomic_DNA"/>
</dbReference>
<dbReference type="SMR" id="B6JNP2"/>
<dbReference type="KEGG" id="hpp:HPP12_1371"/>
<dbReference type="HOGENOM" id="CLU_078912_1_0_7"/>
<dbReference type="Proteomes" id="UP000008198">
    <property type="component" value="Chromosome"/>
</dbReference>
<dbReference type="GO" id="GO:0005737">
    <property type="term" value="C:cytoplasm"/>
    <property type="evidence" value="ECO:0007669"/>
    <property type="project" value="UniProtKB-SubCell"/>
</dbReference>
<dbReference type="GO" id="GO:0016020">
    <property type="term" value="C:membrane"/>
    <property type="evidence" value="ECO:0007669"/>
    <property type="project" value="GOC"/>
</dbReference>
<dbReference type="GO" id="GO:0019171">
    <property type="term" value="F:(3R)-hydroxyacyl-[acyl-carrier-protein] dehydratase activity"/>
    <property type="evidence" value="ECO:0007669"/>
    <property type="project" value="UniProtKB-EC"/>
</dbReference>
<dbReference type="GO" id="GO:0006633">
    <property type="term" value="P:fatty acid biosynthetic process"/>
    <property type="evidence" value="ECO:0007669"/>
    <property type="project" value="UniProtKB-UniRule"/>
</dbReference>
<dbReference type="GO" id="GO:0009245">
    <property type="term" value="P:lipid A biosynthetic process"/>
    <property type="evidence" value="ECO:0007669"/>
    <property type="project" value="UniProtKB-UniRule"/>
</dbReference>
<dbReference type="CDD" id="cd01288">
    <property type="entry name" value="FabZ"/>
    <property type="match status" value="1"/>
</dbReference>
<dbReference type="FunFam" id="3.10.129.10:FF:000001">
    <property type="entry name" value="3-hydroxyacyl-[acyl-carrier-protein] dehydratase FabZ"/>
    <property type="match status" value="1"/>
</dbReference>
<dbReference type="Gene3D" id="3.10.129.10">
    <property type="entry name" value="Hotdog Thioesterase"/>
    <property type="match status" value="1"/>
</dbReference>
<dbReference type="HAMAP" id="MF_00406">
    <property type="entry name" value="FabZ"/>
    <property type="match status" value="1"/>
</dbReference>
<dbReference type="InterPro" id="IPR013114">
    <property type="entry name" value="FabA_FabZ"/>
</dbReference>
<dbReference type="InterPro" id="IPR010084">
    <property type="entry name" value="FabZ"/>
</dbReference>
<dbReference type="InterPro" id="IPR029069">
    <property type="entry name" value="HotDog_dom_sf"/>
</dbReference>
<dbReference type="NCBIfam" id="TIGR01750">
    <property type="entry name" value="fabZ"/>
    <property type="match status" value="1"/>
</dbReference>
<dbReference type="NCBIfam" id="NF000582">
    <property type="entry name" value="PRK00006.1"/>
    <property type="match status" value="1"/>
</dbReference>
<dbReference type="PANTHER" id="PTHR30272">
    <property type="entry name" value="3-HYDROXYACYL-[ACYL-CARRIER-PROTEIN] DEHYDRATASE"/>
    <property type="match status" value="1"/>
</dbReference>
<dbReference type="PANTHER" id="PTHR30272:SF1">
    <property type="entry name" value="3-HYDROXYACYL-[ACYL-CARRIER-PROTEIN] DEHYDRATASE"/>
    <property type="match status" value="1"/>
</dbReference>
<dbReference type="Pfam" id="PF07977">
    <property type="entry name" value="FabA"/>
    <property type="match status" value="1"/>
</dbReference>
<dbReference type="SUPFAM" id="SSF54637">
    <property type="entry name" value="Thioesterase/thiol ester dehydrase-isomerase"/>
    <property type="match status" value="1"/>
</dbReference>